<reference key="1">
    <citation type="journal article" date="2003" name="PLoS Biol.">
        <title>The genome sequence of Caenorhabditis briggsae: a platform for comparative genomics.</title>
        <authorList>
            <person name="Stein L.D."/>
            <person name="Bao Z."/>
            <person name="Blasiar D."/>
            <person name="Blumenthal T."/>
            <person name="Brent M.R."/>
            <person name="Chen N."/>
            <person name="Chinwalla A."/>
            <person name="Clarke L."/>
            <person name="Clee C."/>
            <person name="Coghlan A."/>
            <person name="Coulson A."/>
            <person name="D'Eustachio P."/>
            <person name="Fitch D.H.A."/>
            <person name="Fulton L.A."/>
            <person name="Fulton R.E."/>
            <person name="Griffiths-Jones S."/>
            <person name="Harris T.W."/>
            <person name="Hillier L.W."/>
            <person name="Kamath R."/>
            <person name="Kuwabara P.E."/>
            <person name="Mardis E.R."/>
            <person name="Marra M.A."/>
            <person name="Miner T.L."/>
            <person name="Minx P."/>
            <person name="Mullikin J.C."/>
            <person name="Plumb R.W."/>
            <person name="Rogers J."/>
            <person name="Schein J.E."/>
            <person name="Sohrmann M."/>
            <person name="Spieth J."/>
            <person name="Stajich J.E."/>
            <person name="Wei C."/>
            <person name="Willey D."/>
            <person name="Wilson R.K."/>
            <person name="Durbin R.M."/>
            <person name="Waterston R.H."/>
        </authorList>
    </citation>
    <scope>NUCLEOTIDE SEQUENCE [LARGE SCALE GENOMIC DNA]</scope>
    <source>
        <strain>AF16</strain>
    </source>
</reference>
<proteinExistence type="inferred from homology"/>
<keyword id="KW-0010">Activator</keyword>
<keyword id="KW-0539">Nucleus</keyword>
<keyword id="KW-1185">Reference proteome</keyword>
<keyword id="KW-0804">Transcription</keyword>
<keyword id="KW-0805">Transcription regulation</keyword>
<sequence length="173" mass="20525">MDPNSPMFQNTPQQPMSLQRSVDDRIDRERTAKKEKDDEKKKQEDEKILQLEKKLEEFQENARFIGDLASNFQTKYQDALNGRIYTLIRGLQDLDRMKGTFSDKNVPLDILPYLDDGKNPLLYSKHCMEKTLEKNKAVNGKIEMYKKFRAHLIKEFSEEMPDFVIEYRKERGQ</sequence>
<protein>
    <recommendedName>
        <fullName>Mediator of RNA polymerase II transcription subunit 10</fullName>
    </recommendedName>
    <alternativeName>
        <fullName>Mediator complex subunit 10</fullName>
    </alternativeName>
</protein>
<feature type="chain" id="PRO_0000303161" description="Mediator of RNA polymerase II transcription subunit 10">
    <location>
        <begin position="1"/>
        <end position="173"/>
    </location>
</feature>
<feature type="region of interest" description="Disordered" evidence="2">
    <location>
        <begin position="1"/>
        <end position="45"/>
    </location>
</feature>
<feature type="compositionally biased region" description="Polar residues" evidence="2">
    <location>
        <begin position="1"/>
        <end position="20"/>
    </location>
</feature>
<feature type="compositionally biased region" description="Basic and acidic residues" evidence="2">
    <location>
        <begin position="21"/>
        <end position="45"/>
    </location>
</feature>
<evidence type="ECO:0000250" key="1"/>
<evidence type="ECO:0000256" key="2">
    <source>
        <dbReference type="SAM" id="MobiDB-lite"/>
    </source>
</evidence>
<evidence type="ECO:0000305" key="3"/>
<accession>Q61Z20</accession>
<accession>A8WSB9</accession>
<gene>
    <name type="primary">mdt-10</name>
    <name type="ORF">CBG03308</name>
</gene>
<name>MED10_CAEBR</name>
<comment type="function">
    <text evidence="1">Component of the Mediator complex, a coactivator involved in the regulated transcription of nearly all RNA polymerase II-dependent genes. Mediator functions as a bridge to convey information from gene-specific regulatory proteins to the basal RNA polymerase II transcription machinery. Mediator is recruited to promoters by direct interactions with regulatory proteins and serves as a scaffold for the assembly of a functional preinitiation complex with RNA polymerase II and the general transcription factors (By similarity).</text>
</comment>
<comment type="subunit">
    <text evidence="1">Component of the Mediator complex.</text>
</comment>
<comment type="subcellular location">
    <subcellularLocation>
        <location evidence="1">Nucleus</location>
    </subcellularLocation>
</comment>
<comment type="similarity">
    <text evidence="3">Belongs to the Mediator complex subunit 10 family.</text>
</comment>
<organism>
    <name type="scientific">Caenorhabditis briggsae</name>
    <dbReference type="NCBI Taxonomy" id="6238"/>
    <lineage>
        <taxon>Eukaryota</taxon>
        <taxon>Metazoa</taxon>
        <taxon>Ecdysozoa</taxon>
        <taxon>Nematoda</taxon>
        <taxon>Chromadorea</taxon>
        <taxon>Rhabditida</taxon>
        <taxon>Rhabditina</taxon>
        <taxon>Rhabditomorpha</taxon>
        <taxon>Rhabditoidea</taxon>
        <taxon>Rhabditidae</taxon>
        <taxon>Peloderinae</taxon>
        <taxon>Caenorhabditis</taxon>
    </lineage>
</organism>
<dbReference type="EMBL" id="HE601438">
    <property type="protein sequence ID" value="CAP23378.3"/>
    <property type="molecule type" value="Genomic_DNA"/>
</dbReference>
<dbReference type="SMR" id="Q61Z20"/>
<dbReference type="FunCoup" id="Q61Z20">
    <property type="interactions" value="1937"/>
</dbReference>
<dbReference type="STRING" id="6238.Q61Z20"/>
<dbReference type="KEGG" id="cbr:CBG_03308"/>
<dbReference type="CTD" id="8573444"/>
<dbReference type="WormBase" id="CBG03308">
    <property type="protein sequence ID" value="CBP42055"/>
    <property type="gene ID" value="WBGene00026190"/>
    <property type="gene designation" value="Cbr-mdt-10"/>
</dbReference>
<dbReference type="eggNOG" id="KOG3046">
    <property type="taxonomic scope" value="Eukaryota"/>
</dbReference>
<dbReference type="HOGENOM" id="CLU_096169_3_0_1"/>
<dbReference type="InParanoid" id="Q61Z20"/>
<dbReference type="OMA" id="QYQRAKM"/>
<dbReference type="Proteomes" id="UP000008549">
    <property type="component" value="Unassembled WGS sequence"/>
</dbReference>
<dbReference type="GO" id="GO:0016592">
    <property type="term" value="C:mediator complex"/>
    <property type="evidence" value="ECO:0007669"/>
    <property type="project" value="InterPro"/>
</dbReference>
<dbReference type="GO" id="GO:0003712">
    <property type="term" value="F:transcription coregulator activity"/>
    <property type="evidence" value="ECO:0007669"/>
    <property type="project" value="InterPro"/>
</dbReference>
<dbReference type="GO" id="GO:0006357">
    <property type="term" value="P:regulation of transcription by RNA polymerase II"/>
    <property type="evidence" value="ECO:0007669"/>
    <property type="project" value="InterPro"/>
</dbReference>
<dbReference type="InterPro" id="IPR019145">
    <property type="entry name" value="Mediator_Med10"/>
</dbReference>
<dbReference type="PANTHER" id="PTHR13345">
    <property type="entry name" value="MEDIATOR OF RNA POLYMERASE II TRANSCRIPTION SUBUNIT 10"/>
    <property type="match status" value="1"/>
</dbReference>
<dbReference type="PANTHER" id="PTHR13345:SF13">
    <property type="entry name" value="MEDIATOR OF RNA POLYMERASE II TRANSCRIPTION SUBUNIT 10"/>
    <property type="match status" value="1"/>
</dbReference>
<dbReference type="Pfam" id="PF09748">
    <property type="entry name" value="Med10"/>
    <property type="match status" value="1"/>
</dbReference>